<sequence>MAAAALPAWLSLQSRARTLRAFSTAVYSATPVPTPSLPERTPGNERPPRRKALPPRTEKMAVDQDWPSVYPVAAPFKPSAVPLPVRMGYPVKKGVPMAKEGNLELLKIPNFLHLTPVAIKKHCEALKDFCTEWPAALDSDEKCEKHFPIEIDSTDYVSSGPSVRNPRARVVVLRVKLSSLNLDDHAKKKLIKLVGERYCKTTDVLTIKTDRCPLRRQNYDYAVYLLTVLYHESWNTEEWEKSKTEADMEEYIWENSSSERNILETLLQMKAAEKNMEINKEELLGTKEIEEYKKSVVSLKNEEENENSISQYKESVKRLLNVT</sequence>
<proteinExistence type="evidence at protein level"/>
<gene>
    <name evidence="14" type="primary">MRPS35</name>
    <name evidence="4" type="synonym">MRPS28</name>
    <name type="ORF">HDCMD11P</name>
    <name type="ORF">MDS023</name>
    <name type="ORF">PSEC0213</name>
</gene>
<comment type="subunit">
    <text evidence="3">Component of the mitochondrial small ribosomal subunit (mt-SSU). Mature mammalian 55S mitochondrial ribosomes consist of a small (28S) and a large (39S) subunit. The 28S small subunit contains a 12S ribosomal RNA (12S mt-rRNA) and 30 different proteins. The 39S large subunit contains a 16S rRNA (16S mt-rRNA), a copy of mitochondrial valine transfer RNA (mt-tRNA(Val)), which plays an integral structural role, and 52 different proteins.</text>
</comment>
<comment type="interaction">
    <interactant intactId="EBI-2513649">
        <id>P82673</id>
    </interactant>
    <interactant intactId="EBI-355912">
        <id>P51398</id>
        <label>DAP3</label>
    </interactant>
    <organismsDiffer>false</organismsDiffer>
    <experiments>2</experiments>
</comment>
<comment type="subcellular location">
    <subcellularLocation>
        <location evidence="3">Mitochondrion</location>
    </subcellularLocation>
</comment>
<comment type="alternative products">
    <event type="alternative splicing"/>
    <isoform>
        <id>P82673-1</id>
        <name evidence="7">1</name>
        <sequence type="displayed"/>
    </isoform>
    <isoform>
        <id>P82673-2</id>
        <name evidence="7">2</name>
        <sequence type="described" ref="VSP_054096 VSP_054097"/>
    </isoform>
</comment>
<comment type="similarity">
    <text evidence="7">Belongs to the mitochondrion-specific ribosomal protein mS35 family.</text>
</comment>
<comment type="sequence caution" evidence="7">
    <conflict type="frameshift">
        <sequence resource="EMBL-CDS" id="AAG14958"/>
    </conflict>
</comment>
<reference evidence="7 9" key="1">
    <citation type="submission" date="1999-09" db="EMBL/GenBank/DDBJ databases">
        <title>Novel genes expressed in hematopoietic stem/progenitor cells from myelodysplastic syndrome patients.</title>
        <authorList>
            <person name="Huang C."/>
            <person name="Qian B."/>
            <person name="Tu Y."/>
            <person name="Gu W."/>
            <person name="Wang Y."/>
            <person name="Han Z."/>
            <person name="Chen Z."/>
        </authorList>
    </citation>
    <scope>NUCLEOTIDE SEQUENCE [LARGE SCALE MRNA] (ISOFORM 1)</scope>
    <source>
        <tissue>Hematopoietic stem cell</tissue>
    </source>
</reference>
<reference key="2">
    <citation type="journal article" date="2004" name="Nat. Genet.">
        <title>Complete sequencing and characterization of 21,243 full-length human cDNAs.</title>
        <authorList>
            <person name="Ota T."/>
            <person name="Suzuki Y."/>
            <person name="Nishikawa T."/>
            <person name="Otsuki T."/>
            <person name="Sugiyama T."/>
            <person name="Irie R."/>
            <person name="Wakamatsu A."/>
            <person name="Hayashi K."/>
            <person name="Sato H."/>
            <person name="Nagai K."/>
            <person name="Kimura K."/>
            <person name="Makita H."/>
            <person name="Sekine M."/>
            <person name="Obayashi M."/>
            <person name="Nishi T."/>
            <person name="Shibahara T."/>
            <person name="Tanaka T."/>
            <person name="Ishii S."/>
            <person name="Yamamoto J."/>
            <person name="Saito K."/>
            <person name="Kawai Y."/>
            <person name="Isono Y."/>
            <person name="Nakamura Y."/>
            <person name="Nagahari K."/>
            <person name="Murakami K."/>
            <person name="Yasuda T."/>
            <person name="Iwayanagi T."/>
            <person name="Wagatsuma M."/>
            <person name="Shiratori A."/>
            <person name="Sudo H."/>
            <person name="Hosoiri T."/>
            <person name="Kaku Y."/>
            <person name="Kodaira H."/>
            <person name="Kondo H."/>
            <person name="Sugawara M."/>
            <person name="Takahashi M."/>
            <person name="Kanda K."/>
            <person name="Yokoi T."/>
            <person name="Furuya T."/>
            <person name="Kikkawa E."/>
            <person name="Omura Y."/>
            <person name="Abe K."/>
            <person name="Kamihara K."/>
            <person name="Katsuta N."/>
            <person name="Sato K."/>
            <person name="Tanikawa M."/>
            <person name="Yamazaki M."/>
            <person name="Ninomiya K."/>
            <person name="Ishibashi T."/>
            <person name="Yamashita H."/>
            <person name="Murakawa K."/>
            <person name="Fujimori K."/>
            <person name="Tanai H."/>
            <person name="Kimata M."/>
            <person name="Watanabe M."/>
            <person name="Hiraoka S."/>
            <person name="Chiba Y."/>
            <person name="Ishida S."/>
            <person name="Ono Y."/>
            <person name="Takiguchi S."/>
            <person name="Watanabe S."/>
            <person name="Yosida M."/>
            <person name="Hotuta T."/>
            <person name="Kusano J."/>
            <person name="Kanehori K."/>
            <person name="Takahashi-Fujii A."/>
            <person name="Hara H."/>
            <person name="Tanase T.-O."/>
            <person name="Nomura Y."/>
            <person name="Togiya S."/>
            <person name="Komai F."/>
            <person name="Hara R."/>
            <person name="Takeuchi K."/>
            <person name="Arita M."/>
            <person name="Imose N."/>
            <person name="Musashino K."/>
            <person name="Yuuki H."/>
            <person name="Oshima A."/>
            <person name="Sasaki N."/>
            <person name="Aotsuka S."/>
            <person name="Yoshikawa Y."/>
            <person name="Matsunawa H."/>
            <person name="Ichihara T."/>
            <person name="Shiohata N."/>
            <person name="Sano S."/>
            <person name="Moriya S."/>
            <person name="Momiyama H."/>
            <person name="Satoh N."/>
            <person name="Takami S."/>
            <person name="Terashima Y."/>
            <person name="Suzuki O."/>
            <person name="Nakagawa S."/>
            <person name="Senoh A."/>
            <person name="Mizoguchi H."/>
            <person name="Goto Y."/>
            <person name="Shimizu F."/>
            <person name="Wakebe H."/>
            <person name="Hishigaki H."/>
            <person name="Watanabe T."/>
            <person name="Sugiyama A."/>
            <person name="Takemoto M."/>
            <person name="Kawakami B."/>
            <person name="Yamazaki M."/>
            <person name="Watanabe K."/>
            <person name="Kumagai A."/>
            <person name="Itakura S."/>
            <person name="Fukuzumi Y."/>
            <person name="Fujimori Y."/>
            <person name="Komiyama M."/>
            <person name="Tashiro H."/>
            <person name="Tanigami A."/>
            <person name="Fujiwara T."/>
            <person name="Ono T."/>
            <person name="Yamada K."/>
            <person name="Fujii Y."/>
            <person name="Ozaki K."/>
            <person name="Hirao M."/>
            <person name="Ohmori Y."/>
            <person name="Kawabata A."/>
            <person name="Hikiji T."/>
            <person name="Kobatake N."/>
            <person name="Inagaki H."/>
            <person name="Ikema Y."/>
            <person name="Okamoto S."/>
            <person name="Okitani R."/>
            <person name="Kawakami T."/>
            <person name="Noguchi S."/>
            <person name="Itoh T."/>
            <person name="Shigeta K."/>
            <person name="Senba T."/>
            <person name="Matsumura K."/>
            <person name="Nakajima Y."/>
            <person name="Mizuno T."/>
            <person name="Morinaga M."/>
            <person name="Sasaki M."/>
            <person name="Togashi T."/>
            <person name="Oyama M."/>
            <person name="Hata H."/>
            <person name="Watanabe M."/>
            <person name="Komatsu T."/>
            <person name="Mizushima-Sugano J."/>
            <person name="Satoh T."/>
            <person name="Shirai Y."/>
            <person name="Takahashi Y."/>
            <person name="Nakagawa K."/>
            <person name="Okumura K."/>
            <person name="Nagase T."/>
            <person name="Nomura N."/>
            <person name="Kikuchi H."/>
            <person name="Masuho Y."/>
            <person name="Yamashita R."/>
            <person name="Nakai K."/>
            <person name="Yada T."/>
            <person name="Nakamura Y."/>
            <person name="Ohara O."/>
            <person name="Isogai T."/>
            <person name="Sugano S."/>
        </authorList>
    </citation>
    <scope>NUCLEOTIDE SEQUENCE [LARGE SCALE MRNA] (ISOFORMS 1 AND 2)</scope>
    <source>
        <tissue>Teratocarcinoma</tissue>
    </source>
</reference>
<reference key="3">
    <citation type="journal article" date="2005" name="DNA Res.">
        <title>Signal sequence and keyword trap in silico for selection of full-length human cDNAs encoding secretion or membrane proteins from oligo-capped cDNA libraries.</title>
        <authorList>
            <person name="Otsuki T."/>
            <person name="Ota T."/>
            <person name="Nishikawa T."/>
            <person name="Hayashi K."/>
            <person name="Suzuki Y."/>
            <person name="Yamamoto J."/>
            <person name="Wakamatsu A."/>
            <person name="Kimura K."/>
            <person name="Sakamoto K."/>
            <person name="Hatano N."/>
            <person name="Kawai Y."/>
            <person name="Ishii S."/>
            <person name="Saito K."/>
            <person name="Kojima S."/>
            <person name="Sugiyama T."/>
            <person name="Ono T."/>
            <person name="Okano K."/>
            <person name="Yoshikawa Y."/>
            <person name="Aotsuka S."/>
            <person name="Sasaki N."/>
            <person name="Hattori A."/>
            <person name="Okumura K."/>
            <person name="Nagai K."/>
            <person name="Sugano S."/>
            <person name="Isogai T."/>
        </authorList>
    </citation>
    <scope>NUCLEOTIDE SEQUENCE [LARGE SCALE MRNA] (ISOFORM 1)</scope>
    <source>
        <tissue>Embryo</tissue>
    </source>
</reference>
<reference evidence="7 13" key="4">
    <citation type="journal article" date="2004" name="Genome Res.">
        <title>The status, quality, and expansion of the NIH full-length cDNA project: the Mammalian Gene Collection (MGC).</title>
        <authorList>
            <consortium name="The MGC Project Team"/>
        </authorList>
    </citation>
    <scope>NUCLEOTIDE SEQUENCE [LARGE SCALE MRNA] (ISOFORM 1)</scope>
    <source>
        <tissue evidence="10">Colon</tissue>
        <tissue evidence="12">Lung</tissue>
        <tissue evidence="11">Pancreas</tissue>
    </source>
</reference>
<reference key="5">
    <citation type="journal article" date="2007" name="BMC Genomics">
        <title>The full-ORF clone resource of the German cDNA consortium.</title>
        <authorList>
            <person name="Bechtel S."/>
            <person name="Rosenfelder H."/>
            <person name="Duda A."/>
            <person name="Schmidt C.P."/>
            <person name="Ernst U."/>
            <person name="Wellenreuther R."/>
            <person name="Mehrle A."/>
            <person name="Schuster C."/>
            <person name="Bahr A."/>
            <person name="Bloecker H."/>
            <person name="Heubner D."/>
            <person name="Hoerlein A."/>
            <person name="Michel G."/>
            <person name="Wedler H."/>
            <person name="Koehrer K."/>
            <person name="Ottenwaelder B."/>
            <person name="Poustka A."/>
            <person name="Wiemann S."/>
            <person name="Schupp I."/>
        </authorList>
    </citation>
    <scope>NUCLEOTIDE SEQUENCE [LARGE SCALE MRNA] OF 47-323 (ISOFORM 1)</scope>
    <source>
        <tissue>Melanoma</tissue>
    </source>
</reference>
<reference evidence="7 9" key="6">
    <citation type="submission" date="1998-05" db="EMBL/GenBank/DDBJ databases">
        <title>A novel gene from human dendritic cells.</title>
        <authorList>
            <person name="Zhao Z."/>
            <person name="Huang X."/>
            <person name="Li N."/>
            <person name="Zhu X."/>
            <person name="Cao X."/>
        </authorList>
    </citation>
    <scope>NUCLEOTIDE SEQUENCE [LARGE SCALE MRNA] OF 180-323 (ISOFORM 1)</scope>
    <source>
        <tissue evidence="8">Dendritic cell</tissue>
    </source>
</reference>
<reference evidence="7" key="7">
    <citation type="journal article" date="2001" name="Protein Sci.">
        <title>Identification of four proteins from the small subunit of the mammalian mitochondrial ribosome using a proteomics approach.</title>
        <authorList>
            <person name="Koc E.C."/>
            <person name="Burkhart W."/>
            <person name="Blackburn K."/>
            <person name="Koc H."/>
            <person name="Moseley A."/>
            <person name="Spremulli L.L."/>
        </authorList>
    </citation>
    <scope>IDENTIFICATION</scope>
</reference>
<reference key="8">
    <citation type="journal article" date="2011" name="BMC Syst. Biol.">
        <title>Initial characterization of the human central proteome.</title>
        <authorList>
            <person name="Burkard T.R."/>
            <person name="Planyavsky M."/>
            <person name="Kaupe I."/>
            <person name="Breitwieser F.P."/>
            <person name="Buerckstuemmer T."/>
            <person name="Bennett K.L."/>
            <person name="Superti-Furga G."/>
            <person name="Colinge J."/>
        </authorList>
    </citation>
    <scope>IDENTIFICATION BY MASS SPECTROMETRY [LARGE SCALE ANALYSIS]</scope>
</reference>
<reference key="9">
    <citation type="journal article" date="2015" name="Proteomics">
        <title>N-terminome analysis of the human mitochondrial proteome.</title>
        <authorList>
            <person name="Vaca Jacome A.S."/>
            <person name="Rabilloud T."/>
            <person name="Schaeffer-Reiss C."/>
            <person name="Rompais M."/>
            <person name="Ayoub D."/>
            <person name="Lane L."/>
            <person name="Bairoch A."/>
            <person name="Van Dorsselaer A."/>
            <person name="Carapito C."/>
        </authorList>
    </citation>
    <scope>IDENTIFICATION BY MASS SPECTROMETRY [LARGE SCALE ANALYSIS]</scope>
</reference>
<reference key="10">
    <citation type="journal article" date="2015" name="Science">
        <title>Ribosome. The structure of the human mitochondrial ribosome.</title>
        <authorList>
            <person name="Amunts A."/>
            <person name="Brown A."/>
            <person name="Toots J."/>
            <person name="Scheres S.H."/>
            <person name="Ramakrishnan V."/>
        </authorList>
    </citation>
    <scope>STRUCTURE BY ELECTRON MICROSCOPY (3.50 ANGSTROMS)</scope>
    <scope>SUBUNIT</scope>
    <scope>SUBCELLULAR LOCATION</scope>
</reference>
<feature type="transit peptide" description="Mitochondrion" evidence="7">
    <location>
        <begin position="1"/>
        <end status="unknown"/>
    </location>
</feature>
<feature type="chain" id="PRO_0000046055" description="Small ribosomal subunit protein mS35">
    <location>
        <begin status="unknown"/>
        <end position="323"/>
    </location>
</feature>
<feature type="region of interest" description="Disordered" evidence="2">
    <location>
        <begin position="31"/>
        <end position="59"/>
    </location>
</feature>
<feature type="coiled-coil region" evidence="1">
    <location>
        <begin position="257"/>
        <end position="321"/>
    </location>
</feature>
<feature type="splice variant" id="VSP_054096" description="In isoform 2." evidence="5">
    <original>KLSSLNLDDHAKKKLIKLV</original>
    <variation>PFKEAELRLCSVSTNSVIP</variation>
    <location>
        <begin position="176"/>
        <end position="194"/>
    </location>
</feature>
<feature type="splice variant" id="VSP_054097" description="In isoform 2." evidence="5">
    <location>
        <begin position="195"/>
        <end position="323"/>
    </location>
</feature>
<feature type="sequence variant" id="VAR_052051" description="In dbSNP:rs35475802.">
    <original>L</original>
    <variation>I</variation>
    <location>
        <position position="6"/>
    </location>
</feature>
<feature type="helix" evidence="16">
    <location>
        <begin position="56"/>
        <end position="59"/>
    </location>
</feature>
<feature type="helix" evidence="16">
    <location>
        <begin position="66"/>
        <end position="69"/>
    </location>
</feature>
<feature type="strand" evidence="19">
    <location>
        <begin position="70"/>
        <end position="72"/>
    </location>
</feature>
<feature type="turn" evidence="16">
    <location>
        <begin position="78"/>
        <end position="80"/>
    </location>
</feature>
<feature type="strand" evidence="19">
    <location>
        <begin position="86"/>
        <end position="88"/>
    </location>
</feature>
<feature type="helix" evidence="16">
    <location>
        <begin position="103"/>
        <end position="106"/>
    </location>
</feature>
<feature type="helix" evidence="18">
    <location>
        <begin position="112"/>
        <end position="114"/>
    </location>
</feature>
<feature type="helix" evidence="16">
    <location>
        <begin position="116"/>
        <end position="125"/>
    </location>
</feature>
<feature type="helix" evidence="16">
    <location>
        <begin position="126"/>
        <end position="129"/>
    </location>
</feature>
<feature type="helix" evidence="16">
    <location>
        <begin position="140"/>
        <end position="146"/>
    </location>
</feature>
<feature type="strand" evidence="16">
    <location>
        <begin position="149"/>
        <end position="157"/>
    </location>
</feature>
<feature type="strand" evidence="16">
    <location>
        <begin position="160"/>
        <end position="162"/>
    </location>
</feature>
<feature type="helix" evidence="16">
    <location>
        <begin position="166"/>
        <end position="169"/>
    </location>
</feature>
<feature type="strand" evidence="16">
    <location>
        <begin position="171"/>
        <end position="176"/>
    </location>
</feature>
<feature type="helix" evidence="16">
    <location>
        <begin position="177"/>
        <end position="179"/>
    </location>
</feature>
<feature type="helix" evidence="16">
    <location>
        <begin position="184"/>
        <end position="194"/>
    </location>
</feature>
<feature type="helix" evidence="16">
    <location>
        <begin position="195"/>
        <end position="197"/>
    </location>
</feature>
<feature type="turn" evidence="16">
    <location>
        <begin position="200"/>
        <end position="203"/>
    </location>
</feature>
<feature type="strand" evidence="16">
    <location>
        <begin position="204"/>
        <end position="209"/>
    </location>
</feature>
<feature type="strand" evidence="16">
    <location>
        <begin position="212"/>
        <end position="214"/>
    </location>
</feature>
<feature type="helix" evidence="16">
    <location>
        <begin position="215"/>
        <end position="233"/>
    </location>
</feature>
<feature type="helix" evidence="16">
    <location>
        <begin position="239"/>
        <end position="242"/>
    </location>
</feature>
<feature type="turn" evidence="16">
    <location>
        <begin position="245"/>
        <end position="247"/>
    </location>
</feature>
<feature type="strand" evidence="17">
    <location>
        <begin position="254"/>
        <end position="256"/>
    </location>
</feature>
<feature type="helix" evidence="16">
    <location>
        <begin position="257"/>
        <end position="272"/>
    </location>
</feature>
<feature type="turn" evidence="15">
    <location>
        <begin position="280"/>
        <end position="285"/>
    </location>
</feature>
<feature type="helix" evidence="16">
    <location>
        <begin position="287"/>
        <end position="301"/>
    </location>
</feature>
<feature type="helix" evidence="16">
    <location>
        <begin position="306"/>
        <end position="320"/>
    </location>
</feature>
<accession>P82673</accession>
<accession>Q32LZ1</accession>
<accession>Q6P4C6</accession>
<accession>Q7L1M6</accession>
<accession>Q8NBP4</accession>
<accession>Q96AI0</accession>
<accession>Q9H044</accession>
<accession>Q9HC14</accession>
<accession>Q9P1R5</accession>
<organism>
    <name type="scientific">Homo sapiens</name>
    <name type="common">Human</name>
    <dbReference type="NCBI Taxonomy" id="9606"/>
    <lineage>
        <taxon>Eukaryota</taxon>
        <taxon>Metazoa</taxon>
        <taxon>Chordata</taxon>
        <taxon>Craniata</taxon>
        <taxon>Vertebrata</taxon>
        <taxon>Euteleostomi</taxon>
        <taxon>Mammalia</taxon>
        <taxon>Eutheria</taxon>
        <taxon>Euarchontoglires</taxon>
        <taxon>Primates</taxon>
        <taxon>Haplorrhini</taxon>
        <taxon>Catarrhini</taxon>
        <taxon>Hominidae</taxon>
        <taxon>Homo</taxon>
    </lineage>
</organism>
<protein>
    <recommendedName>
        <fullName evidence="6">Small ribosomal subunit protein mS35</fullName>
    </recommendedName>
    <alternativeName>
        <fullName>28S ribosomal protein S28, mitochondrial</fullName>
        <shortName>MRP-S28</shortName>
        <shortName>S28mt</shortName>
    </alternativeName>
    <alternativeName>
        <fullName>28S ribosomal protein S35, mitochondrial</fullName>
        <shortName>MRP-S35</shortName>
        <shortName>S35mt</shortName>
    </alternativeName>
</protein>
<keyword id="KW-0002">3D-structure</keyword>
<keyword id="KW-0025">Alternative splicing</keyword>
<keyword id="KW-0175">Coiled coil</keyword>
<keyword id="KW-0496">Mitochondrion</keyword>
<keyword id="KW-1267">Proteomics identification</keyword>
<keyword id="KW-1185">Reference proteome</keyword>
<keyword id="KW-0687">Ribonucleoprotein</keyword>
<keyword id="KW-0689">Ribosomal protein</keyword>
<keyword id="KW-0809">Transit peptide</keyword>
<evidence type="ECO:0000255" key="1"/>
<evidence type="ECO:0000256" key="2">
    <source>
        <dbReference type="SAM" id="MobiDB-lite"/>
    </source>
</evidence>
<evidence type="ECO:0000269" key="3">
    <source>
    </source>
</evidence>
<evidence type="ECO:0000303" key="4">
    <source>
    </source>
</evidence>
<evidence type="ECO:0000303" key="5">
    <source>
    </source>
</evidence>
<evidence type="ECO:0000303" key="6">
    <source>
    </source>
</evidence>
<evidence type="ECO:0000305" key="7"/>
<evidence type="ECO:0000312" key="8">
    <source>
        <dbReference type="EMBL" id="AAF65185.1"/>
    </source>
</evidence>
<evidence type="ECO:0000312" key="9">
    <source>
        <dbReference type="EMBL" id="AAG14958.1"/>
    </source>
</evidence>
<evidence type="ECO:0000312" key="10">
    <source>
        <dbReference type="EMBL" id="AAH17086.1"/>
    </source>
</evidence>
<evidence type="ECO:0000312" key="11">
    <source>
        <dbReference type="EMBL" id="AAH28346.2"/>
    </source>
</evidence>
<evidence type="ECO:0000312" key="12">
    <source>
        <dbReference type="EMBL" id="AAH63515.1"/>
    </source>
</evidence>
<evidence type="ECO:0000312" key="13">
    <source>
        <dbReference type="EMBL" id="AAI09373.1"/>
    </source>
</evidence>
<evidence type="ECO:0000312" key="14">
    <source>
        <dbReference type="HGNC" id="HGNC:16635"/>
    </source>
</evidence>
<evidence type="ECO:0007829" key="15">
    <source>
        <dbReference type="PDB" id="8CSP"/>
    </source>
</evidence>
<evidence type="ECO:0007829" key="16">
    <source>
        <dbReference type="PDB" id="8CSS"/>
    </source>
</evidence>
<evidence type="ECO:0007829" key="17">
    <source>
        <dbReference type="PDB" id="8CST"/>
    </source>
</evidence>
<evidence type="ECO:0007829" key="18">
    <source>
        <dbReference type="PDB" id="8QRL"/>
    </source>
</evidence>
<evidence type="ECO:0007829" key="19">
    <source>
        <dbReference type="PDB" id="8QRN"/>
    </source>
</evidence>
<name>RT35_HUMAN</name>
<dbReference type="EMBL" id="AF182422">
    <property type="protein sequence ID" value="AAG14958.1"/>
    <property type="status" value="ALT_FRAME"/>
    <property type="molecule type" value="mRNA"/>
</dbReference>
<dbReference type="EMBL" id="AK075378">
    <property type="protein sequence ID" value="BAC11579.1"/>
    <property type="molecule type" value="mRNA"/>
</dbReference>
<dbReference type="EMBL" id="AK075515">
    <property type="protein sequence ID" value="BAC11664.1"/>
    <property type="molecule type" value="mRNA"/>
</dbReference>
<dbReference type="EMBL" id="BC015862">
    <property type="protein sequence ID" value="AAH15862.2"/>
    <property type="molecule type" value="mRNA"/>
</dbReference>
<dbReference type="EMBL" id="BC017086">
    <property type="protein sequence ID" value="AAH17086.1"/>
    <property type="molecule type" value="mRNA"/>
</dbReference>
<dbReference type="EMBL" id="BC028346">
    <property type="protein sequence ID" value="AAH28346.2"/>
    <property type="molecule type" value="mRNA"/>
</dbReference>
<dbReference type="EMBL" id="BC063515">
    <property type="protein sequence ID" value="AAH63515.1"/>
    <property type="molecule type" value="mRNA"/>
</dbReference>
<dbReference type="EMBL" id="BC109372">
    <property type="protein sequence ID" value="AAI09373.1"/>
    <property type="molecule type" value="mRNA"/>
</dbReference>
<dbReference type="EMBL" id="AL512733">
    <property type="protein sequence ID" value="CAC21665.1"/>
    <property type="molecule type" value="mRNA"/>
</dbReference>
<dbReference type="EMBL" id="AF068296">
    <property type="protein sequence ID" value="AAF65185.1"/>
    <property type="molecule type" value="mRNA"/>
</dbReference>
<dbReference type="CCDS" id="CCDS53769.1">
    <molecule id="P82673-2"/>
</dbReference>
<dbReference type="CCDS" id="CCDS8714.1">
    <molecule id="P82673-1"/>
</dbReference>
<dbReference type="RefSeq" id="NP_001177793.1">
    <molecule id="P82673-2"/>
    <property type="nucleotide sequence ID" value="NM_001190864.2"/>
</dbReference>
<dbReference type="RefSeq" id="NP_068593.2">
    <molecule id="P82673-1"/>
    <property type="nucleotide sequence ID" value="NM_021821.3"/>
</dbReference>
<dbReference type="PDB" id="3J9M">
    <property type="method" value="EM"/>
    <property type="resolution" value="3.50 A"/>
    <property type="chains" value="A1=1-323"/>
</dbReference>
<dbReference type="PDB" id="6NU2">
    <property type="method" value="EM"/>
    <property type="resolution" value="3.90 A"/>
    <property type="chains" value="A1=52-323"/>
</dbReference>
<dbReference type="PDB" id="6NU3">
    <property type="method" value="EM"/>
    <property type="resolution" value="4.40 A"/>
    <property type="chains" value="A1=1-323"/>
</dbReference>
<dbReference type="PDB" id="6RW4">
    <property type="method" value="EM"/>
    <property type="resolution" value="2.97 A"/>
    <property type="chains" value="1=1-323"/>
</dbReference>
<dbReference type="PDB" id="6RW5">
    <property type="method" value="EM"/>
    <property type="resolution" value="3.14 A"/>
    <property type="chains" value="1=1-323"/>
</dbReference>
<dbReference type="PDB" id="6VLZ">
    <property type="method" value="EM"/>
    <property type="resolution" value="2.97 A"/>
    <property type="chains" value="A1=1-323"/>
</dbReference>
<dbReference type="PDB" id="6VMI">
    <property type="method" value="EM"/>
    <property type="resolution" value="2.96 A"/>
    <property type="chains" value="A1=1-323"/>
</dbReference>
<dbReference type="PDB" id="6ZM5">
    <property type="method" value="EM"/>
    <property type="resolution" value="2.89 A"/>
    <property type="chains" value="A1=1-323"/>
</dbReference>
<dbReference type="PDB" id="6ZM6">
    <property type="method" value="EM"/>
    <property type="resolution" value="2.59 A"/>
    <property type="chains" value="A1=1-323"/>
</dbReference>
<dbReference type="PDB" id="6ZS9">
    <property type="method" value="EM"/>
    <property type="resolution" value="4.00 A"/>
    <property type="chains" value="A1=1-323"/>
</dbReference>
<dbReference type="PDB" id="6ZSA">
    <property type="method" value="EM"/>
    <property type="resolution" value="4.00 A"/>
    <property type="chains" value="A1=1-323"/>
</dbReference>
<dbReference type="PDB" id="6ZSB">
    <property type="method" value="EM"/>
    <property type="resolution" value="4.50 A"/>
    <property type="chains" value="A1=1-323"/>
</dbReference>
<dbReference type="PDB" id="6ZSC">
    <property type="method" value="EM"/>
    <property type="resolution" value="3.50 A"/>
    <property type="chains" value="A1=1-323"/>
</dbReference>
<dbReference type="PDB" id="6ZSD">
    <property type="method" value="EM"/>
    <property type="resolution" value="3.70 A"/>
    <property type="chains" value="A1=1-323"/>
</dbReference>
<dbReference type="PDB" id="6ZSE">
    <property type="method" value="EM"/>
    <property type="resolution" value="5.00 A"/>
    <property type="chains" value="A1=1-323"/>
</dbReference>
<dbReference type="PDB" id="6ZSG">
    <property type="method" value="EM"/>
    <property type="resolution" value="4.00 A"/>
    <property type="chains" value="A1=1-323"/>
</dbReference>
<dbReference type="PDB" id="7A5F">
    <property type="method" value="EM"/>
    <property type="resolution" value="4.40 A"/>
    <property type="chains" value="b6=1-323"/>
</dbReference>
<dbReference type="PDB" id="7A5G">
    <property type="method" value="EM"/>
    <property type="resolution" value="4.33 A"/>
    <property type="chains" value="b6=1-323"/>
</dbReference>
<dbReference type="PDB" id="7A5I">
    <property type="method" value="EM"/>
    <property type="resolution" value="3.70 A"/>
    <property type="chains" value="b6=1-323"/>
</dbReference>
<dbReference type="PDB" id="7A5K">
    <property type="method" value="EM"/>
    <property type="resolution" value="3.70 A"/>
    <property type="chains" value="b6=1-323"/>
</dbReference>
<dbReference type="PDB" id="7L08">
    <property type="method" value="EM"/>
    <property type="resolution" value="3.49 A"/>
    <property type="chains" value="A1=1-323"/>
</dbReference>
<dbReference type="PDB" id="7OG4">
    <property type="method" value="EM"/>
    <property type="resolution" value="3.80 A"/>
    <property type="chains" value="A1=1-323"/>
</dbReference>
<dbReference type="PDB" id="7P2E">
    <property type="method" value="EM"/>
    <property type="resolution" value="2.40 A"/>
    <property type="chains" value="1=1-323"/>
</dbReference>
<dbReference type="PDB" id="7PNX">
    <property type="method" value="EM"/>
    <property type="resolution" value="2.76 A"/>
    <property type="chains" value="1=1-323"/>
</dbReference>
<dbReference type="PDB" id="7PNY">
    <property type="method" value="EM"/>
    <property type="resolution" value="3.06 A"/>
    <property type="chains" value="1=1-323"/>
</dbReference>
<dbReference type="PDB" id="7PNZ">
    <property type="method" value="EM"/>
    <property type="resolution" value="3.09 A"/>
    <property type="chains" value="1=1-323"/>
</dbReference>
<dbReference type="PDB" id="7PO0">
    <property type="method" value="EM"/>
    <property type="resolution" value="2.90 A"/>
    <property type="chains" value="1=1-323"/>
</dbReference>
<dbReference type="PDB" id="7PO1">
    <property type="method" value="EM"/>
    <property type="resolution" value="2.92 A"/>
    <property type="chains" value="1=1-323"/>
</dbReference>
<dbReference type="PDB" id="7PO2">
    <property type="method" value="EM"/>
    <property type="resolution" value="3.09 A"/>
    <property type="chains" value="1=1-323"/>
</dbReference>
<dbReference type="PDB" id="7PO3">
    <property type="method" value="EM"/>
    <property type="resolution" value="2.92 A"/>
    <property type="chains" value="1=1-323"/>
</dbReference>
<dbReference type="PDB" id="7QI4">
    <property type="method" value="EM"/>
    <property type="resolution" value="2.21 A"/>
    <property type="chains" value="A1=1-323"/>
</dbReference>
<dbReference type="PDB" id="7QI5">
    <property type="method" value="EM"/>
    <property type="resolution" value="2.63 A"/>
    <property type="chains" value="A1=1-323"/>
</dbReference>
<dbReference type="PDB" id="7QI6">
    <property type="method" value="EM"/>
    <property type="resolution" value="2.98 A"/>
    <property type="chains" value="A1=1-323"/>
</dbReference>
<dbReference type="PDB" id="8ANY">
    <property type="method" value="EM"/>
    <property type="resolution" value="2.85 A"/>
    <property type="chains" value="A1=1-323"/>
</dbReference>
<dbReference type="PDB" id="8CSP">
    <property type="method" value="EM"/>
    <property type="resolution" value="2.66 A"/>
    <property type="chains" value="1=1-323"/>
</dbReference>
<dbReference type="PDB" id="8CSQ">
    <property type="method" value="EM"/>
    <property type="resolution" value="2.54 A"/>
    <property type="chains" value="1=1-323"/>
</dbReference>
<dbReference type="PDB" id="8CSR">
    <property type="method" value="EM"/>
    <property type="resolution" value="2.54 A"/>
    <property type="chains" value="1=1-323"/>
</dbReference>
<dbReference type="PDB" id="8CSS">
    <property type="method" value="EM"/>
    <property type="resolution" value="2.36 A"/>
    <property type="chains" value="1=1-323"/>
</dbReference>
<dbReference type="PDB" id="8CST">
    <property type="method" value="EM"/>
    <property type="resolution" value="2.85 A"/>
    <property type="chains" value="1=1-323"/>
</dbReference>
<dbReference type="PDB" id="8CSU">
    <property type="method" value="EM"/>
    <property type="resolution" value="3.03 A"/>
    <property type="chains" value="1=1-323"/>
</dbReference>
<dbReference type="PDB" id="8K2A">
    <property type="method" value="EM"/>
    <property type="resolution" value="2.90 A"/>
    <property type="chains" value="Sk=1-323"/>
</dbReference>
<dbReference type="PDB" id="8OIR">
    <property type="method" value="EM"/>
    <property type="resolution" value="3.10 A"/>
    <property type="chains" value="AB=1-323"/>
</dbReference>
<dbReference type="PDB" id="8OIS">
    <property type="method" value="EM"/>
    <property type="resolution" value="3.00 A"/>
    <property type="chains" value="AB=1-323"/>
</dbReference>
<dbReference type="PDB" id="8QRK">
    <property type="method" value="EM"/>
    <property type="resolution" value="6.69 A"/>
    <property type="chains" value="1=1-323"/>
</dbReference>
<dbReference type="PDB" id="8QRL">
    <property type="method" value="EM"/>
    <property type="resolution" value="3.34 A"/>
    <property type="chains" value="1=1-323"/>
</dbReference>
<dbReference type="PDB" id="8QRM">
    <property type="method" value="EM"/>
    <property type="resolution" value="3.05 A"/>
    <property type="chains" value="1=1-323"/>
</dbReference>
<dbReference type="PDB" id="8QRN">
    <property type="method" value="EM"/>
    <property type="resolution" value="2.98 A"/>
    <property type="chains" value="1=1-323"/>
</dbReference>
<dbReference type="PDB" id="8RRI">
    <property type="method" value="EM"/>
    <property type="resolution" value="2.40 A"/>
    <property type="chains" value="A1=1-323"/>
</dbReference>
<dbReference type="PDB" id="8XT0">
    <property type="method" value="EM"/>
    <property type="resolution" value="3.20 A"/>
    <property type="chains" value="Sk=1-323"/>
</dbReference>
<dbReference type="PDB" id="8XT2">
    <property type="method" value="EM"/>
    <property type="resolution" value="3.30 A"/>
    <property type="chains" value="Sk=1-323"/>
</dbReference>
<dbReference type="PDBsum" id="3J9M"/>
<dbReference type="PDBsum" id="6NU2"/>
<dbReference type="PDBsum" id="6NU3"/>
<dbReference type="PDBsum" id="6RW4"/>
<dbReference type="PDBsum" id="6RW5"/>
<dbReference type="PDBsum" id="6VLZ"/>
<dbReference type="PDBsum" id="6VMI"/>
<dbReference type="PDBsum" id="6ZM5"/>
<dbReference type="PDBsum" id="6ZM6"/>
<dbReference type="PDBsum" id="6ZS9"/>
<dbReference type="PDBsum" id="6ZSA"/>
<dbReference type="PDBsum" id="6ZSB"/>
<dbReference type="PDBsum" id="6ZSC"/>
<dbReference type="PDBsum" id="6ZSD"/>
<dbReference type="PDBsum" id="6ZSE"/>
<dbReference type="PDBsum" id="6ZSG"/>
<dbReference type="PDBsum" id="7A5F"/>
<dbReference type="PDBsum" id="7A5G"/>
<dbReference type="PDBsum" id="7A5I"/>
<dbReference type="PDBsum" id="7A5K"/>
<dbReference type="PDBsum" id="7L08"/>
<dbReference type="PDBsum" id="7OG4"/>
<dbReference type="PDBsum" id="7P2E"/>
<dbReference type="PDBsum" id="7PNX"/>
<dbReference type="PDBsum" id="7PNY"/>
<dbReference type="PDBsum" id="7PNZ"/>
<dbReference type="PDBsum" id="7PO0"/>
<dbReference type="PDBsum" id="7PO1"/>
<dbReference type="PDBsum" id="7PO2"/>
<dbReference type="PDBsum" id="7PO3"/>
<dbReference type="PDBsum" id="7QI4"/>
<dbReference type="PDBsum" id="7QI5"/>
<dbReference type="PDBsum" id="7QI6"/>
<dbReference type="PDBsum" id="8ANY"/>
<dbReference type="PDBsum" id="8CSP"/>
<dbReference type="PDBsum" id="8CSQ"/>
<dbReference type="PDBsum" id="8CSR"/>
<dbReference type="PDBsum" id="8CSS"/>
<dbReference type="PDBsum" id="8CST"/>
<dbReference type="PDBsum" id="8CSU"/>
<dbReference type="PDBsum" id="8K2A"/>
<dbReference type="PDBsum" id="8OIR"/>
<dbReference type="PDBsum" id="8OIS"/>
<dbReference type="PDBsum" id="8QRK"/>
<dbReference type="PDBsum" id="8QRL"/>
<dbReference type="PDBsum" id="8QRM"/>
<dbReference type="PDBsum" id="8QRN"/>
<dbReference type="PDBsum" id="8RRI"/>
<dbReference type="PDBsum" id="8XT0"/>
<dbReference type="PDBsum" id="8XT2"/>
<dbReference type="EMDB" id="EMD-0514"/>
<dbReference type="EMDB" id="EMD-0515"/>
<dbReference type="EMDB" id="EMD-10021"/>
<dbReference type="EMDB" id="EMD-10022"/>
<dbReference type="EMDB" id="EMD-11278"/>
<dbReference type="EMDB" id="EMD-11279"/>
<dbReference type="EMDB" id="EMD-11390"/>
<dbReference type="EMDB" id="EMD-11391"/>
<dbReference type="EMDB" id="EMD-11392"/>
<dbReference type="EMDB" id="EMD-11393"/>
<dbReference type="EMDB" id="EMD-11394"/>
<dbReference type="EMDB" id="EMD-11395"/>
<dbReference type="EMDB" id="EMD-11397"/>
<dbReference type="EMDB" id="EMD-11641"/>
<dbReference type="EMDB" id="EMD-11642"/>
<dbReference type="EMDB" id="EMD-11644"/>
<dbReference type="EMDB" id="EMD-11646"/>
<dbReference type="EMDB" id="EMD-12877"/>
<dbReference type="EMDB" id="EMD-13170"/>
<dbReference type="EMDB" id="EMD-13555"/>
<dbReference type="EMDB" id="EMD-13556"/>
<dbReference type="EMDB" id="EMD-13557"/>
<dbReference type="EMDB" id="EMD-13558"/>
<dbReference type="EMDB" id="EMD-13559"/>
<dbReference type="EMDB" id="EMD-13560"/>
<dbReference type="EMDB" id="EMD-13561"/>
<dbReference type="EMDB" id="EMD-13980"/>
<dbReference type="EMDB" id="EMD-13981"/>
<dbReference type="EMDB" id="EMD-13982"/>
<dbReference type="EMDB" id="EMD-15544"/>
<dbReference type="EMDB" id="EMD-16897"/>
<dbReference type="EMDB" id="EMD-16898"/>
<dbReference type="EMDB" id="EMD-19460"/>
<dbReference type="EMDB" id="EMD-21233"/>
<dbReference type="EMDB" id="EMD-21242"/>
<dbReference type="EMDB" id="EMD-23096"/>
<dbReference type="EMDB" id="EMD-26966"/>
<dbReference type="EMDB" id="EMD-26967"/>
<dbReference type="EMDB" id="EMD-26968"/>
<dbReference type="EMDB" id="EMD-26969"/>
<dbReference type="EMDB" id="EMD-26970"/>
<dbReference type="EMDB" id="EMD-26971"/>
<dbReference type="EMDB" id="EMD-36836"/>
<dbReference type="EMDB" id="EMD-38632"/>
<dbReference type="EMDB" id="EMD-38634"/>
<dbReference type="SMR" id="P82673"/>
<dbReference type="BioGRID" id="121919">
    <property type="interactions" value="325"/>
</dbReference>
<dbReference type="ComplexPortal" id="CPX-5225">
    <property type="entry name" value="28S mitochondrial small ribosomal subunit"/>
</dbReference>
<dbReference type="CORUM" id="P82673"/>
<dbReference type="FunCoup" id="P82673">
    <property type="interactions" value="1733"/>
</dbReference>
<dbReference type="IntAct" id="P82673">
    <property type="interactions" value="164"/>
</dbReference>
<dbReference type="MINT" id="P82673"/>
<dbReference type="STRING" id="9606.ENSP00000081029"/>
<dbReference type="GlyGen" id="P82673">
    <property type="glycosylation" value="2 sites, 1 O-linked glycan (1 site)"/>
</dbReference>
<dbReference type="iPTMnet" id="P82673"/>
<dbReference type="MetOSite" id="P82673"/>
<dbReference type="PhosphoSitePlus" id="P82673"/>
<dbReference type="BioMuta" id="MRPS35"/>
<dbReference type="DMDM" id="74708095"/>
<dbReference type="jPOST" id="P82673"/>
<dbReference type="MassIVE" id="P82673"/>
<dbReference type="PaxDb" id="9606-ENSP00000081029"/>
<dbReference type="PeptideAtlas" id="P82673"/>
<dbReference type="ProteomicsDB" id="57712">
    <molecule id="P82673-1"/>
</dbReference>
<dbReference type="ProteomicsDB" id="57713">
    <molecule id="P82673-2"/>
</dbReference>
<dbReference type="Pumba" id="P82673"/>
<dbReference type="Antibodypedia" id="24450">
    <property type="antibodies" value="123 antibodies from 25 providers"/>
</dbReference>
<dbReference type="DNASU" id="60488"/>
<dbReference type="Ensembl" id="ENST00000081029.8">
    <molecule id="P82673-1"/>
    <property type="protein sequence ID" value="ENSP00000081029.3"/>
    <property type="gene ID" value="ENSG00000061794.13"/>
</dbReference>
<dbReference type="Ensembl" id="ENST00000538315.5">
    <molecule id="P82673-2"/>
    <property type="protein sequence ID" value="ENSP00000445390.1"/>
    <property type="gene ID" value="ENSG00000061794.13"/>
</dbReference>
<dbReference type="GeneID" id="60488"/>
<dbReference type="KEGG" id="hsa:60488"/>
<dbReference type="MANE-Select" id="ENST00000081029.8">
    <property type="protein sequence ID" value="ENSP00000081029.3"/>
    <property type="RefSeq nucleotide sequence ID" value="NM_021821.4"/>
    <property type="RefSeq protein sequence ID" value="NP_068593.2"/>
</dbReference>
<dbReference type="UCSC" id="uc001rih.4">
    <molecule id="P82673-1"/>
    <property type="organism name" value="human"/>
</dbReference>
<dbReference type="AGR" id="HGNC:16635"/>
<dbReference type="CTD" id="60488"/>
<dbReference type="DisGeNET" id="60488"/>
<dbReference type="GeneCards" id="MRPS35"/>
<dbReference type="HGNC" id="HGNC:16635">
    <property type="gene designation" value="MRPS35"/>
</dbReference>
<dbReference type="HPA" id="ENSG00000061794">
    <property type="expression patterns" value="Low tissue specificity"/>
</dbReference>
<dbReference type="MIM" id="611995">
    <property type="type" value="gene"/>
</dbReference>
<dbReference type="neXtProt" id="NX_P82673"/>
<dbReference type="OpenTargets" id="ENSG00000061794"/>
<dbReference type="PharmGKB" id="PA31022"/>
<dbReference type="VEuPathDB" id="HostDB:ENSG00000061794"/>
<dbReference type="eggNOG" id="KOG3933">
    <property type="taxonomic scope" value="Eukaryota"/>
</dbReference>
<dbReference type="GeneTree" id="ENSGT00390000003443"/>
<dbReference type="HOGENOM" id="CLU_060973_0_1_1"/>
<dbReference type="InParanoid" id="P82673"/>
<dbReference type="OMA" id="TIRTDRC"/>
<dbReference type="OrthoDB" id="283424at2759"/>
<dbReference type="PAN-GO" id="P82673">
    <property type="GO annotations" value="2 GO annotations based on evolutionary models"/>
</dbReference>
<dbReference type="PhylomeDB" id="P82673"/>
<dbReference type="TreeFam" id="TF318686"/>
<dbReference type="PathwayCommons" id="P82673"/>
<dbReference type="Reactome" id="R-HSA-5368286">
    <property type="pathway name" value="Mitochondrial translation initiation"/>
</dbReference>
<dbReference type="Reactome" id="R-HSA-5389840">
    <property type="pathway name" value="Mitochondrial translation elongation"/>
</dbReference>
<dbReference type="Reactome" id="R-HSA-5419276">
    <property type="pathway name" value="Mitochondrial translation termination"/>
</dbReference>
<dbReference type="SignaLink" id="P82673"/>
<dbReference type="SIGNOR" id="P82673"/>
<dbReference type="BioGRID-ORCS" id="60488">
    <property type="hits" value="436 hits in 1172 CRISPR screens"/>
</dbReference>
<dbReference type="ChiTaRS" id="MRPS35">
    <property type="organism name" value="human"/>
</dbReference>
<dbReference type="GeneWiki" id="MRPS35"/>
<dbReference type="GenomeRNAi" id="60488"/>
<dbReference type="Pharos" id="P82673">
    <property type="development level" value="Tdark"/>
</dbReference>
<dbReference type="PRO" id="PR:P82673"/>
<dbReference type="Proteomes" id="UP000005640">
    <property type="component" value="Chromosome 12"/>
</dbReference>
<dbReference type="RNAct" id="P82673">
    <property type="molecule type" value="protein"/>
</dbReference>
<dbReference type="Bgee" id="ENSG00000061794">
    <property type="expression patterns" value="Expressed in rectum and 204 other cell types or tissues"/>
</dbReference>
<dbReference type="ExpressionAtlas" id="P82673">
    <property type="expression patterns" value="baseline and differential"/>
</dbReference>
<dbReference type="GO" id="GO:0005829">
    <property type="term" value="C:cytosol"/>
    <property type="evidence" value="ECO:0000314"/>
    <property type="project" value="HPA"/>
</dbReference>
<dbReference type="GO" id="GO:0005743">
    <property type="term" value="C:mitochondrial inner membrane"/>
    <property type="evidence" value="ECO:0000304"/>
    <property type="project" value="Reactome"/>
</dbReference>
<dbReference type="GO" id="GO:0005763">
    <property type="term" value="C:mitochondrial small ribosomal subunit"/>
    <property type="evidence" value="ECO:0000250"/>
    <property type="project" value="UniProtKB"/>
</dbReference>
<dbReference type="GO" id="GO:0005739">
    <property type="term" value="C:mitochondrion"/>
    <property type="evidence" value="ECO:0000314"/>
    <property type="project" value="HPA"/>
</dbReference>
<dbReference type="GO" id="GO:0003723">
    <property type="term" value="F:RNA binding"/>
    <property type="evidence" value="ECO:0007005"/>
    <property type="project" value="UniProtKB"/>
</dbReference>
<dbReference type="GO" id="GO:0003735">
    <property type="term" value="F:structural constituent of ribosome"/>
    <property type="evidence" value="ECO:0000318"/>
    <property type="project" value="GO_Central"/>
</dbReference>
<dbReference type="GO" id="GO:0032543">
    <property type="term" value="P:mitochondrial translation"/>
    <property type="evidence" value="ECO:0000303"/>
    <property type="project" value="ComplexPortal"/>
</dbReference>
<dbReference type="InterPro" id="IPR019349">
    <property type="entry name" value="Ribosomal_mS35_mit"/>
</dbReference>
<dbReference type="InterPro" id="IPR039848">
    <property type="entry name" value="Ribosomal_mS35_mt"/>
</dbReference>
<dbReference type="PANTHER" id="PTHR13490">
    <property type="entry name" value="MITOCHONDRIAL 28S RIBOSOMAL PROTEIN S28"/>
    <property type="match status" value="1"/>
</dbReference>
<dbReference type="PANTHER" id="PTHR13490:SF0">
    <property type="entry name" value="SMALL RIBOSOMAL SUBUNIT PROTEIN MS35"/>
    <property type="match status" value="1"/>
</dbReference>
<dbReference type="Pfam" id="PF10213">
    <property type="entry name" value="MRP-S28"/>
    <property type="match status" value="1"/>
</dbReference>